<reference evidence="6 7" key="1">
    <citation type="journal article" date="2008" name="Regul. Pept.">
        <title>Disulfide-containing peptides from the glandular skin secretions of froglets of the genus Crinia: structure, activity and evolutionary trends.</title>
        <authorList>
            <person name="Jackway R.J."/>
            <person name="Pukala T.L."/>
            <person name="Maselli V.M."/>
            <person name="Musgrave I.F."/>
            <person name="Bowie J.H."/>
            <person name="Liu Y."/>
            <person name="Surinya-Johnson K.H."/>
            <person name="Donnellan S.C."/>
            <person name="Doyle J.R."/>
            <person name="Llewellyn L.E."/>
            <person name="Tyler M.J."/>
        </authorList>
    </citation>
    <scope>NUCLEOTIDE SEQUENCE [MRNA]</scope>
    <scope>TISSUE SPECIFICITY</scope>
    <scope>DISCUSSION OF SEQUENCE</scope>
    <source>
        <tissue evidence="7">Skin</tissue>
    </source>
</reference>
<comment type="subcellular location">
    <subcellularLocation>
        <location evidence="1">Secreted</location>
    </subcellularLocation>
</comment>
<comment type="tissue specificity">
    <text evidence="4">Expressed by the skin glands.</text>
</comment>
<sequence length="68" mass="7176">MKIIVVLAVLMLVSAQVCLVSAAEMGHSSDNELSSRDLVKRFFLPPCAHKGTCGKRSIESSEGANGGE</sequence>
<accession>A6MWT0</accession>
<keyword id="KW-0027">Amidation</keyword>
<keyword id="KW-0878">Amphibian defense peptide</keyword>
<keyword id="KW-0165">Cleavage on pair of basic residues</keyword>
<keyword id="KW-1015">Disulfide bond</keyword>
<keyword id="KW-0964">Secreted</keyword>
<keyword id="KW-0732">Signal</keyword>
<dbReference type="EMBL" id="EF550519">
    <property type="protein sequence ID" value="ABQ88315.1"/>
    <property type="molecule type" value="mRNA"/>
</dbReference>
<dbReference type="SMR" id="A6MWT0"/>
<dbReference type="GO" id="GO:0005576">
    <property type="term" value="C:extracellular region"/>
    <property type="evidence" value="ECO:0007669"/>
    <property type="project" value="UniProtKB-SubCell"/>
</dbReference>
<dbReference type="GO" id="GO:0006952">
    <property type="term" value="P:defense response"/>
    <property type="evidence" value="ECO:0007669"/>
    <property type="project" value="UniProtKB-KW"/>
</dbReference>
<protein>
    <recommendedName>
        <fullName evidence="5 7">Riparin-1.5 amide</fullName>
    </recommendedName>
</protein>
<name>RI15A_CRIRI</name>
<proteinExistence type="evidence at transcript level"/>
<feature type="signal peptide" evidence="3 5">
    <location>
        <begin position="1"/>
        <end position="15"/>
    </location>
</feature>
<feature type="propeptide" id="PRO_0000371730" evidence="4">
    <location>
        <begin position="16"/>
        <end position="41"/>
    </location>
</feature>
<feature type="peptide" id="PRO_5000254173" description="Riparin-1.5 amide">
    <location>
        <begin position="42"/>
        <end position="53"/>
    </location>
</feature>
<feature type="propeptide" id="PRO_0000371731" evidence="2">
    <location>
        <begin position="57"/>
        <end position="68"/>
    </location>
</feature>
<feature type="modified residue" description="Cysteine amide" evidence="3 6">
    <location>
        <position position="53"/>
    </location>
</feature>
<feature type="disulfide bond" evidence="2">
    <location>
        <begin position="47"/>
        <end position="53"/>
    </location>
</feature>
<organism>
    <name type="scientific">Crinia riparia</name>
    <name type="common">Streambank froglet</name>
    <name type="synonym">Flinders Ranges froglet</name>
    <dbReference type="NCBI Taxonomy" id="446489"/>
    <lineage>
        <taxon>Eukaryota</taxon>
        <taxon>Metazoa</taxon>
        <taxon>Chordata</taxon>
        <taxon>Craniata</taxon>
        <taxon>Vertebrata</taxon>
        <taxon>Euteleostomi</taxon>
        <taxon>Amphibia</taxon>
        <taxon>Batrachia</taxon>
        <taxon>Anura</taxon>
        <taxon>Neobatrachia</taxon>
        <taxon>Myobatrachoidea</taxon>
        <taxon>Myobatrachidae</taxon>
        <taxon>Myobatrachinae</taxon>
        <taxon>Crinia</taxon>
    </lineage>
</organism>
<evidence type="ECO:0000250" key="1"/>
<evidence type="ECO:0000250" key="2">
    <source>
        <dbReference type="UniProtKB" id="A6MWS9"/>
    </source>
</evidence>
<evidence type="ECO:0000255" key="3"/>
<evidence type="ECO:0000269" key="4">
    <source>
    </source>
</evidence>
<evidence type="ECO:0000303" key="5">
    <source>
    </source>
</evidence>
<evidence type="ECO:0000305" key="6"/>
<evidence type="ECO:0000312" key="7">
    <source>
        <dbReference type="EMBL" id="ABQ88315.1"/>
    </source>
</evidence>